<keyword id="KW-0378">Hydrolase</keyword>
<keyword id="KW-1185">Reference proteome</keyword>
<evidence type="ECO:0000305" key="1"/>
<feature type="chain" id="PRO_0000049433" description="Uncharacterized isochorismatase family protein YaaI">
    <location>
        <begin position="1"/>
        <end position="181"/>
    </location>
</feature>
<protein>
    <recommendedName>
        <fullName>Uncharacterized isochorismatase family protein YaaI</fullName>
        <ecNumber>3.-.-.-</ecNumber>
    </recommendedName>
</protein>
<reference key="1">
    <citation type="journal article" date="1994" name="DNA Res.">
        <title>Systematic sequencing of the 180 kilobase region of the Bacillus subtilis chromosome containing the replication origin.</title>
        <authorList>
            <person name="Ogasawara N."/>
            <person name="Nakai S."/>
            <person name="Yoshikawa H."/>
        </authorList>
    </citation>
    <scope>NUCLEOTIDE SEQUENCE [GENOMIC DNA]</scope>
    <source>
        <strain>168</strain>
    </source>
</reference>
<reference key="2">
    <citation type="journal article" date="1997" name="Nature">
        <title>The complete genome sequence of the Gram-positive bacterium Bacillus subtilis.</title>
        <authorList>
            <person name="Kunst F."/>
            <person name="Ogasawara N."/>
            <person name="Moszer I."/>
            <person name="Albertini A.M."/>
            <person name="Alloni G."/>
            <person name="Azevedo V."/>
            <person name="Bertero M.G."/>
            <person name="Bessieres P."/>
            <person name="Bolotin A."/>
            <person name="Borchert S."/>
            <person name="Borriss R."/>
            <person name="Boursier L."/>
            <person name="Brans A."/>
            <person name="Braun M."/>
            <person name="Brignell S.C."/>
            <person name="Bron S."/>
            <person name="Brouillet S."/>
            <person name="Bruschi C.V."/>
            <person name="Caldwell B."/>
            <person name="Capuano V."/>
            <person name="Carter N.M."/>
            <person name="Choi S.-K."/>
            <person name="Codani J.-J."/>
            <person name="Connerton I.F."/>
            <person name="Cummings N.J."/>
            <person name="Daniel R.A."/>
            <person name="Denizot F."/>
            <person name="Devine K.M."/>
            <person name="Duesterhoeft A."/>
            <person name="Ehrlich S.D."/>
            <person name="Emmerson P.T."/>
            <person name="Entian K.-D."/>
            <person name="Errington J."/>
            <person name="Fabret C."/>
            <person name="Ferrari E."/>
            <person name="Foulger D."/>
            <person name="Fritz C."/>
            <person name="Fujita M."/>
            <person name="Fujita Y."/>
            <person name="Fuma S."/>
            <person name="Galizzi A."/>
            <person name="Galleron N."/>
            <person name="Ghim S.-Y."/>
            <person name="Glaser P."/>
            <person name="Goffeau A."/>
            <person name="Golightly E.J."/>
            <person name="Grandi G."/>
            <person name="Guiseppi G."/>
            <person name="Guy B.J."/>
            <person name="Haga K."/>
            <person name="Haiech J."/>
            <person name="Harwood C.R."/>
            <person name="Henaut A."/>
            <person name="Hilbert H."/>
            <person name="Holsappel S."/>
            <person name="Hosono S."/>
            <person name="Hullo M.-F."/>
            <person name="Itaya M."/>
            <person name="Jones L.-M."/>
            <person name="Joris B."/>
            <person name="Karamata D."/>
            <person name="Kasahara Y."/>
            <person name="Klaerr-Blanchard M."/>
            <person name="Klein C."/>
            <person name="Kobayashi Y."/>
            <person name="Koetter P."/>
            <person name="Koningstein G."/>
            <person name="Krogh S."/>
            <person name="Kumano M."/>
            <person name="Kurita K."/>
            <person name="Lapidus A."/>
            <person name="Lardinois S."/>
            <person name="Lauber J."/>
            <person name="Lazarevic V."/>
            <person name="Lee S.-M."/>
            <person name="Levine A."/>
            <person name="Liu H."/>
            <person name="Masuda S."/>
            <person name="Mauel C."/>
            <person name="Medigue C."/>
            <person name="Medina N."/>
            <person name="Mellado R.P."/>
            <person name="Mizuno M."/>
            <person name="Moestl D."/>
            <person name="Nakai S."/>
            <person name="Noback M."/>
            <person name="Noone D."/>
            <person name="O'Reilly M."/>
            <person name="Ogawa K."/>
            <person name="Ogiwara A."/>
            <person name="Oudega B."/>
            <person name="Park S.-H."/>
            <person name="Parro V."/>
            <person name="Pohl T.M."/>
            <person name="Portetelle D."/>
            <person name="Porwollik S."/>
            <person name="Prescott A.M."/>
            <person name="Presecan E."/>
            <person name="Pujic P."/>
            <person name="Purnelle B."/>
            <person name="Rapoport G."/>
            <person name="Rey M."/>
            <person name="Reynolds S."/>
            <person name="Rieger M."/>
            <person name="Rivolta C."/>
            <person name="Rocha E."/>
            <person name="Roche B."/>
            <person name="Rose M."/>
            <person name="Sadaie Y."/>
            <person name="Sato T."/>
            <person name="Scanlan E."/>
            <person name="Schleich S."/>
            <person name="Schroeter R."/>
            <person name="Scoffone F."/>
            <person name="Sekiguchi J."/>
            <person name="Sekowska A."/>
            <person name="Seror S.J."/>
            <person name="Serror P."/>
            <person name="Shin B.-S."/>
            <person name="Soldo B."/>
            <person name="Sorokin A."/>
            <person name="Tacconi E."/>
            <person name="Takagi T."/>
            <person name="Takahashi H."/>
            <person name="Takemaru K."/>
            <person name="Takeuchi M."/>
            <person name="Tamakoshi A."/>
            <person name="Tanaka T."/>
            <person name="Terpstra P."/>
            <person name="Tognoni A."/>
            <person name="Tosato V."/>
            <person name="Uchiyama S."/>
            <person name="Vandenbol M."/>
            <person name="Vannier F."/>
            <person name="Vassarotti A."/>
            <person name="Viari A."/>
            <person name="Wambutt R."/>
            <person name="Wedler E."/>
            <person name="Wedler H."/>
            <person name="Weitzenegger T."/>
            <person name="Winters P."/>
            <person name="Wipat A."/>
            <person name="Yamamoto H."/>
            <person name="Yamane K."/>
            <person name="Yasumoto K."/>
            <person name="Yata K."/>
            <person name="Yoshida K."/>
            <person name="Yoshikawa H.-F."/>
            <person name="Zumstein E."/>
            <person name="Yoshikawa H."/>
            <person name="Danchin A."/>
        </authorList>
    </citation>
    <scope>NUCLEOTIDE SEQUENCE [LARGE SCALE GENOMIC DNA]</scope>
    <source>
        <strain>168</strain>
    </source>
</reference>
<name>YAAI_BACSU</name>
<accession>P37532</accession>
<dbReference type="EC" id="3.-.-.-"/>
<dbReference type="EMBL" id="D26185">
    <property type="protein sequence ID" value="BAA05253.1"/>
    <property type="molecule type" value="Genomic_DNA"/>
</dbReference>
<dbReference type="EMBL" id="AL009126">
    <property type="protein sequence ID" value="CAB11793.1"/>
    <property type="molecule type" value="Genomic_DNA"/>
</dbReference>
<dbReference type="PIR" id="S66047">
    <property type="entry name" value="S66047"/>
</dbReference>
<dbReference type="RefSeq" id="NP_387898.1">
    <property type="nucleotide sequence ID" value="NC_000964.3"/>
</dbReference>
<dbReference type="RefSeq" id="WP_003247139.1">
    <property type="nucleotide sequence ID" value="NZ_OZ025638.1"/>
</dbReference>
<dbReference type="SMR" id="P37532"/>
<dbReference type="FunCoup" id="P37532">
    <property type="interactions" value="30"/>
</dbReference>
<dbReference type="STRING" id="224308.BSU00170"/>
<dbReference type="PaxDb" id="224308-BSU00170"/>
<dbReference type="EnsemblBacteria" id="CAB11793">
    <property type="protein sequence ID" value="CAB11793"/>
    <property type="gene ID" value="BSU_00170"/>
</dbReference>
<dbReference type="GeneID" id="937036"/>
<dbReference type="KEGG" id="bsu:BSU00170"/>
<dbReference type="PATRIC" id="fig|224308.179.peg.17"/>
<dbReference type="eggNOG" id="COG1335">
    <property type="taxonomic scope" value="Bacteria"/>
</dbReference>
<dbReference type="InParanoid" id="P37532"/>
<dbReference type="OrthoDB" id="4305745at2"/>
<dbReference type="PhylomeDB" id="P37532"/>
<dbReference type="BioCyc" id="BSUB:BSU00170-MONOMER"/>
<dbReference type="Proteomes" id="UP000001570">
    <property type="component" value="Chromosome"/>
</dbReference>
<dbReference type="GO" id="GO:0016787">
    <property type="term" value="F:hydrolase activity"/>
    <property type="evidence" value="ECO:0007669"/>
    <property type="project" value="UniProtKB-KW"/>
</dbReference>
<dbReference type="CDD" id="cd00431">
    <property type="entry name" value="cysteine_hydrolases"/>
    <property type="match status" value="1"/>
</dbReference>
<dbReference type="Gene3D" id="3.40.50.850">
    <property type="entry name" value="Isochorismatase-like"/>
    <property type="match status" value="1"/>
</dbReference>
<dbReference type="InterPro" id="IPR000868">
    <property type="entry name" value="Isochorismatase-like_dom"/>
</dbReference>
<dbReference type="InterPro" id="IPR050272">
    <property type="entry name" value="Isochorismatase-like_hydrls"/>
</dbReference>
<dbReference type="InterPro" id="IPR036380">
    <property type="entry name" value="Isochorismatase-like_sf"/>
</dbReference>
<dbReference type="PANTHER" id="PTHR43540:SF6">
    <property type="entry name" value="ISOCHORISMATASE-LIKE DOMAIN-CONTAINING PROTEIN"/>
    <property type="match status" value="1"/>
</dbReference>
<dbReference type="PANTHER" id="PTHR43540">
    <property type="entry name" value="PEROXYUREIDOACRYLATE/UREIDOACRYLATE AMIDOHYDROLASE-RELATED"/>
    <property type="match status" value="1"/>
</dbReference>
<dbReference type="Pfam" id="PF00857">
    <property type="entry name" value="Isochorismatase"/>
    <property type="match status" value="1"/>
</dbReference>
<dbReference type="SUPFAM" id="SSF52499">
    <property type="entry name" value="Isochorismatase-like hydrolases"/>
    <property type="match status" value="1"/>
</dbReference>
<organism>
    <name type="scientific">Bacillus subtilis (strain 168)</name>
    <dbReference type="NCBI Taxonomy" id="224308"/>
    <lineage>
        <taxon>Bacteria</taxon>
        <taxon>Bacillati</taxon>
        <taxon>Bacillota</taxon>
        <taxon>Bacilli</taxon>
        <taxon>Bacillales</taxon>
        <taxon>Bacillaceae</taxon>
        <taxon>Bacillus</taxon>
    </lineage>
</organism>
<gene>
    <name type="primary">yaaI</name>
    <name type="ordered locus">BSU00170</name>
</gene>
<comment type="similarity">
    <text evidence="1">Belongs to the isochorismatase family.</text>
</comment>
<sequence length="181" mass="20809">MSKADKALLIVDMINNFEFDMGETLAKKTEKIVPHILSLKEHARQNEWPIIYINDHYGLWQADIKNIQQECTNERSKDIITKIAPVDADYFLIKPKHSAFYETALHTLLTELQVRHIIITGIAGNICVLFTANDAYMREYSITIPKDCIASNSDEDNEFALTMMENVLFAEITTEEQIIEK</sequence>
<proteinExistence type="inferred from homology"/>